<dbReference type="EMBL" id="BC077785">
    <property type="protein sequence ID" value="AAH77785.1"/>
    <property type="molecule type" value="mRNA"/>
</dbReference>
<dbReference type="RefSeq" id="NP_001086930.1">
    <property type="nucleotide sequence ID" value="NM_001093461.1"/>
</dbReference>
<dbReference type="SMR" id="Q6DD44"/>
<dbReference type="DNASU" id="446765"/>
<dbReference type="GeneID" id="446765"/>
<dbReference type="KEGG" id="xla:446765"/>
<dbReference type="AGR" id="Xenbase:XB-GENE-1015951"/>
<dbReference type="CTD" id="446765"/>
<dbReference type="Xenbase" id="XB-GENE-1015951">
    <property type="gene designation" value="xpr1.L"/>
</dbReference>
<dbReference type="OMA" id="NNIIPEW"/>
<dbReference type="OrthoDB" id="9970435at2759"/>
<dbReference type="Proteomes" id="UP000186698">
    <property type="component" value="Chromosome 4L"/>
</dbReference>
<dbReference type="Bgee" id="446765">
    <property type="expression patterns" value="Expressed in brain and 19 other cell types or tissues"/>
</dbReference>
<dbReference type="GO" id="GO:0005794">
    <property type="term" value="C:Golgi apparatus"/>
    <property type="evidence" value="ECO:0007669"/>
    <property type="project" value="TreeGrafter"/>
</dbReference>
<dbReference type="GO" id="GO:0005886">
    <property type="term" value="C:plasma membrane"/>
    <property type="evidence" value="ECO:0000250"/>
    <property type="project" value="UniProtKB"/>
</dbReference>
<dbReference type="GO" id="GO:0015562">
    <property type="term" value="F:efflux transmembrane transporter activity"/>
    <property type="evidence" value="ECO:0000250"/>
    <property type="project" value="UniProtKB"/>
</dbReference>
<dbReference type="GO" id="GO:0000822">
    <property type="term" value="F:inositol hexakisphosphate binding"/>
    <property type="evidence" value="ECO:0000250"/>
    <property type="project" value="UniProtKB"/>
</dbReference>
<dbReference type="GO" id="GO:0005315">
    <property type="term" value="F:phosphate transmembrane transporter activity"/>
    <property type="evidence" value="ECO:0000250"/>
    <property type="project" value="UniProtKB"/>
</dbReference>
<dbReference type="GO" id="GO:0016036">
    <property type="term" value="P:cellular response to phosphate starvation"/>
    <property type="evidence" value="ECO:0000318"/>
    <property type="project" value="GO_Central"/>
</dbReference>
<dbReference type="GO" id="GO:0030643">
    <property type="term" value="P:intracellular phosphate ion homeostasis"/>
    <property type="evidence" value="ECO:0000250"/>
    <property type="project" value="UniProtKB"/>
</dbReference>
<dbReference type="GO" id="GO:0035435">
    <property type="term" value="P:phosphate ion transmembrane transport"/>
    <property type="evidence" value="ECO:0000250"/>
    <property type="project" value="UniProtKB"/>
</dbReference>
<dbReference type="GO" id="GO:0006817">
    <property type="term" value="P:phosphate ion transport"/>
    <property type="evidence" value="ECO:0000318"/>
    <property type="project" value="GO_Central"/>
</dbReference>
<dbReference type="CDD" id="cd14477">
    <property type="entry name" value="SPX_XPR1_like"/>
    <property type="match status" value="1"/>
</dbReference>
<dbReference type="InterPro" id="IPR004342">
    <property type="entry name" value="EXS_C"/>
</dbReference>
<dbReference type="InterPro" id="IPR004331">
    <property type="entry name" value="SPX_dom"/>
</dbReference>
<dbReference type="PANTHER" id="PTHR10783:SF103">
    <property type="entry name" value="SOLUTE CARRIER FAMILY 53 MEMBER 1"/>
    <property type="match status" value="1"/>
</dbReference>
<dbReference type="PANTHER" id="PTHR10783">
    <property type="entry name" value="XENOTROPIC AND POLYTROPIC RETROVIRUS RECEPTOR 1-RELATED"/>
    <property type="match status" value="1"/>
</dbReference>
<dbReference type="Pfam" id="PF03124">
    <property type="entry name" value="EXS"/>
    <property type="match status" value="1"/>
</dbReference>
<dbReference type="Pfam" id="PF03105">
    <property type="entry name" value="SPX"/>
    <property type="match status" value="3"/>
</dbReference>
<dbReference type="PROSITE" id="PS51380">
    <property type="entry name" value="EXS"/>
    <property type="match status" value="1"/>
</dbReference>
<dbReference type="PROSITE" id="PS51382">
    <property type="entry name" value="SPX"/>
    <property type="match status" value="1"/>
</dbReference>
<gene>
    <name type="primary">xpr1</name>
</gene>
<reference key="1">
    <citation type="submission" date="2004-07" db="EMBL/GenBank/DDBJ databases">
        <authorList>
            <consortium name="NIH - Xenopus Gene Collection (XGC) project"/>
        </authorList>
    </citation>
    <scope>NUCLEOTIDE SEQUENCE [LARGE SCALE MRNA]</scope>
    <source>
        <tissue>Embryo</tissue>
    </source>
</reference>
<feature type="chain" id="PRO_0000315861" description="Xenotropic and polytropic retrovirus receptor 1 homolog">
    <location>
        <begin position="1"/>
        <end position="692"/>
    </location>
</feature>
<feature type="topological domain" description="Cytoplasmic" evidence="4">
    <location>
        <begin position="1"/>
        <end position="238"/>
    </location>
</feature>
<feature type="transmembrane region" description="Helical" evidence="4">
    <location>
        <begin position="239"/>
        <end position="259"/>
    </location>
</feature>
<feature type="topological domain" description="Extracellular" evidence="4">
    <location>
        <begin position="260"/>
        <end position="269"/>
    </location>
</feature>
<feature type="transmembrane region" description="Helical" evidence="4">
    <location>
        <begin position="270"/>
        <end position="290"/>
    </location>
</feature>
<feature type="topological domain" description="Cytoplasmic" evidence="4">
    <location>
        <begin position="291"/>
        <end position="314"/>
    </location>
</feature>
<feature type="transmembrane region" description="Helical" evidence="4">
    <location>
        <begin position="315"/>
        <end position="335"/>
    </location>
</feature>
<feature type="topological domain" description="Extracellular" evidence="4">
    <location>
        <begin position="336"/>
        <end position="338"/>
    </location>
</feature>
<feature type="transmembrane region" description="Helical" evidence="4">
    <location>
        <begin position="339"/>
        <end position="359"/>
    </location>
</feature>
<feature type="topological domain" description="Cytoplasmic" evidence="4">
    <location>
        <begin position="360"/>
        <end position="375"/>
    </location>
</feature>
<feature type="transmembrane region" description="Helical" evidence="4">
    <location>
        <begin position="376"/>
        <end position="396"/>
    </location>
</feature>
<feature type="topological domain" description="Extracellular" evidence="4">
    <location>
        <begin position="397"/>
        <end position="401"/>
    </location>
</feature>
<feature type="transmembrane region" description="Helical" evidence="4">
    <location>
        <begin position="402"/>
        <end position="422"/>
    </location>
</feature>
<feature type="topological domain" description="Cytoplasmic" evidence="4">
    <location>
        <begin position="423"/>
        <end position="468"/>
    </location>
</feature>
<feature type="transmembrane region" description="Helical" evidence="4">
    <location>
        <begin position="469"/>
        <end position="491"/>
    </location>
</feature>
<feature type="topological domain" description="Extracellular" evidence="4">
    <location>
        <begin position="492"/>
        <end position="503"/>
    </location>
</feature>
<feature type="transmembrane region" description="Helical" evidence="4">
    <location>
        <begin position="504"/>
        <end position="524"/>
    </location>
</feature>
<feature type="topological domain" description="Cytoplasmic" evidence="4">
    <location>
        <begin position="525"/>
        <end position="692"/>
    </location>
</feature>
<feature type="domain" description="SPX" evidence="6">
    <location>
        <begin position="1"/>
        <end position="177"/>
    </location>
</feature>
<feature type="domain" description="EXS" evidence="5">
    <location>
        <begin position="435"/>
        <end position="639"/>
    </location>
</feature>
<feature type="region of interest" description="Important for inositol polyphosphate binding" evidence="1">
    <location>
        <begin position="158"/>
        <end position="165"/>
    </location>
</feature>
<feature type="region of interest" description="Disordered" evidence="7">
    <location>
        <begin position="660"/>
        <end position="692"/>
    </location>
</feature>
<feature type="compositionally biased region" description="Polar residues" evidence="7">
    <location>
        <begin position="660"/>
        <end position="674"/>
    </location>
</feature>
<feature type="site" description="Important for inositol polyphosphate binding" evidence="1">
    <location>
        <position position="22"/>
    </location>
</feature>
<feature type="site" description="Important for inositol polyphosphate binding" evidence="1">
    <location>
        <position position="26"/>
    </location>
</feature>
<keyword id="KW-1003">Cell membrane</keyword>
<keyword id="KW-0472">Membrane</keyword>
<keyword id="KW-1185">Reference proteome</keyword>
<keyword id="KW-0812">Transmembrane</keyword>
<keyword id="KW-1133">Transmembrane helix</keyword>
<evidence type="ECO:0000250" key="1">
    <source>
        <dbReference type="UniProtKB" id="P43585"/>
    </source>
</evidence>
<evidence type="ECO:0000250" key="2">
    <source>
        <dbReference type="UniProtKB" id="Q9UBH6"/>
    </source>
</evidence>
<evidence type="ECO:0000250" key="3">
    <source>
        <dbReference type="UniProtKB" id="Q9Z0U0"/>
    </source>
</evidence>
<evidence type="ECO:0000255" key="4"/>
<evidence type="ECO:0000255" key="5">
    <source>
        <dbReference type="PROSITE-ProRule" id="PRU00712"/>
    </source>
</evidence>
<evidence type="ECO:0000255" key="6">
    <source>
        <dbReference type="PROSITE-ProRule" id="PRU00714"/>
    </source>
</evidence>
<evidence type="ECO:0000256" key="7">
    <source>
        <dbReference type="SAM" id="MobiDB-lite"/>
    </source>
</evidence>
<evidence type="ECO:0000305" key="8"/>
<comment type="function">
    <text evidence="2 3">Plays a role in phosphate homeostasis. Mediates phosphate export from the cell. Binds inositol hexakisphosphate (Ins6P) and similar inositol polyphosphates, such as 5-diphospho-inositol pentakisphosphate (5-InsP7); these are important intracellular signaling molecules.</text>
</comment>
<comment type="subcellular location">
    <subcellularLocation>
        <location evidence="2">Cell membrane</location>
        <topology evidence="2">Multi-pass membrane protein</topology>
    </subcellularLocation>
</comment>
<comment type="domain">
    <text evidence="2">The SPX domain has high affinity for inositol polyphosphates, such as myo-inositol hexakisphosphate and 5-diphospho-myo-inositol pentakisphosphate (5-InsP7). Its affinity for inorganic phosphate is tow to three orders of magnitude lower.</text>
</comment>
<comment type="similarity">
    <text evidence="8">Belongs to the SYG1 (TC 2.A.94) family.</text>
</comment>
<proteinExistence type="evidence at transcript level"/>
<organism>
    <name type="scientific">Xenopus laevis</name>
    <name type="common">African clawed frog</name>
    <dbReference type="NCBI Taxonomy" id="8355"/>
    <lineage>
        <taxon>Eukaryota</taxon>
        <taxon>Metazoa</taxon>
        <taxon>Chordata</taxon>
        <taxon>Craniata</taxon>
        <taxon>Vertebrata</taxon>
        <taxon>Euteleostomi</taxon>
        <taxon>Amphibia</taxon>
        <taxon>Batrachia</taxon>
        <taxon>Anura</taxon>
        <taxon>Pipoidea</taxon>
        <taxon>Pipidae</taxon>
        <taxon>Xenopodinae</taxon>
        <taxon>Xenopus</taxon>
        <taxon>Xenopus</taxon>
    </lineage>
</organism>
<name>XPR1_XENLA</name>
<accession>Q6DD44</accession>
<protein>
    <recommendedName>
        <fullName>Xenotropic and polytropic retrovirus receptor 1 homolog</fullName>
    </recommendedName>
</protein>
<sequence length="692" mass="80939">MKFTEHLSAHITPEWRKQYIQYEAFKEMLYAAQDQAPSIEVTDEDTVKRYYAKFEEKFFQTCEKELAKINTFYSEKLAEAQRRSATLQNELQSSLDAQRESSVVPGLRQRRKAVFALTHEERVQHRNIKDLKLAFSEFYLSLILLQNYQNLNFTGFRKILKKHDKILETSRGADWRVAHVEVAPFYTCKKINQLISETETVVTNELESGDRQKAMKRLRVPPLGAAQPAPAWTTFRVGLYCGIFMVVNLAVVMAGYHFLQGKNVWPMVRIYRGGFLLIEFLFLLGINTYGWRQAGVNHVLIFELNPRNNLSHQHLFEIAGFLGILWCFSLFSCIFGLSINLQMHLNPLILYGIMLVFLVNPTKTFYYKSRFWLLKLLFRVFTAPFHKVGFADFWLADQLNSLAIILMDLEFMICFYSFELNWGKSEGLVESAKSVCNSYSYGVRAVVQCIPAWLRFIQCLRRYRDTKRAFPHLVNAGKYSTTFFMVTFAALYSTHKERNHSDAQVFFYLWIVFYFISSCYTLIWDLKMDWGLFDRNAGENTFLREEIVYPQKAYYYCAIIQDVILRFAWTIQISVTSLNLFTDAGDVISTVLAPLEVFRRFVWNFFRLENEHLNNCGEFRAVRDISVAPLNADDQTMLEQMMDQDDGVKNRVKSRIWKRSQSMSLRRPRLSSQSKMKDAKILIDDTDDEANT</sequence>